<comment type="function">
    <text evidence="1">Component of the acetyl coenzyme A carboxylase (ACC) complex. Biotin carboxylase (BC) catalyzes the carboxylation of biotin on its carrier protein (BCCP) and then the CO(2) group is transferred by the transcarboxylase to acetyl-CoA to form malonyl-CoA.</text>
</comment>
<comment type="catalytic activity">
    <reaction evidence="1">
        <text>N(6)-carboxybiotinyl-L-lysyl-[protein] + acetyl-CoA = N(6)-biotinyl-L-lysyl-[protein] + malonyl-CoA</text>
        <dbReference type="Rhea" id="RHEA:54728"/>
        <dbReference type="Rhea" id="RHEA-COMP:10505"/>
        <dbReference type="Rhea" id="RHEA-COMP:10506"/>
        <dbReference type="ChEBI" id="CHEBI:57288"/>
        <dbReference type="ChEBI" id="CHEBI:57384"/>
        <dbReference type="ChEBI" id="CHEBI:83144"/>
        <dbReference type="ChEBI" id="CHEBI:83145"/>
        <dbReference type="EC" id="2.1.3.15"/>
    </reaction>
</comment>
<comment type="pathway">
    <text evidence="1">Lipid metabolism; malonyl-CoA biosynthesis; malonyl-CoA from acetyl-CoA: step 1/1.</text>
</comment>
<comment type="subunit">
    <text evidence="1">Acetyl-CoA carboxylase is a heterohexamer composed of biotin carboxyl carrier protein (AccB), biotin carboxylase (AccC) and two subunits each of ACCase subunit alpha (AccA) and ACCase subunit beta (AccD).</text>
</comment>
<comment type="subcellular location">
    <subcellularLocation>
        <location evidence="1">Cytoplasm</location>
    </subcellularLocation>
</comment>
<comment type="similarity">
    <text evidence="1">Belongs to the AccD/PCCB family.</text>
</comment>
<accession>Q6G1D3</accession>
<feature type="chain" id="PRO_0000389693" description="Acetyl-coenzyme A carboxylase carboxyl transferase subunit beta">
    <location>
        <begin position="1"/>
        <end position="306"/>
    </location>
</feature>
<feature type="domain" description="CoA carboxyltransferase N-terminal" evidence="2">
    <location>
        <begin position="25"/>
        <end position="294"/>
    </location>
</feature>
<feature type="region of interest" description="Disordered" evidence="3">
    <location>
        <begin position="286"/>
        <end position="306"/>
    </location>
</feature>
<feature type="compositionally biased region" description="Polar residues" evidence="3">
    <location>
        <begin position="287"/>
        <end position="299"/>
    </location>
</feature>
<dbReference type="EC" id="2.1.3.15" evidence="1"/>
<dbReference type="EMBL" id="BX897700">
    <property type="protein sequence ID" value="CAF25539.1"/>
    <property type="molecule type" value="Genomic_DNA"/>
</dbReference>
<dbReference type="RefSeq" id="WP_011178868.1">
    <property type="nucleotide sequence ID" value="NC_005955.1"/>
</dbReference>
<dbReference type="SMR" id="Q6G1D3"/>
<dbReference type="KEGG" id="bqu:BQ00320"/>
<dbReference type="eggNOG" id="COG0777">
    <property type="taxonomic scope" value="Bacteria"/>
</dbReference>
<dbReference type="HOGENOM" id="CLU_015486_1_0_5"/>
<dbReference type="OrthoDB" id="9772975at2"/>
<dbReference type="UniPathway" id="UPA00655">
    <property type="reaction ID" value="UER00711"/>
</dbReference>
<dbReference type="Proteomes" id="UP000000597">
    <property type="component" value="Chromosome"/>
</dbReference>
<dbReference type="GO" id="GO:0009329">
    <property type="term" value="C:acetate CoA-transferase complex"/>
    <property type="evidence" value="ECO:0007669"/>
    <property type="project" value="TreeGrafter"/>
</dbReference>
<dbReference type="GO" id="GO:0003989">
    <property type="term" value="F:acetyl-CoA carboxylase activity"/>
    <property type="evidence" value="ECO:0007669"/>
    <property type="project" value="InterPro"/>
</dbReference>
<dbReference type="GO" id="GO:0005524">
    <property type="term" value="F:ATP binding"/>
    <property type="evidence" value="ECO:0007669"/>
    <property type="project" value="UniProtKB-KW"/>
</dbReference>
<dbReference type="GO" id="GO:0016743">
    <property type="term" value="F:carboxyl- or carbamoyltransferase activity"/>
    <property type="evidence" value="ECO:0007669"/>
    <property type="project" value="UniProtKB-UniRule"/>
</dbReference>
<dbReference type="GO" id="GO:0006633">
    <property type="term" value="P:fatty acid biosynthetic process"/>
    <property type="evidence" value="ECO:0007669"/>
    <property type="project" value="UniProtKB-KW"/>
</dbReference>
<dbReference type="GO" id="GO:2001295">
    <property type="term" value="P:malonyl-CoA biosynthetic process"/>
    <property type="evidence" value="ECO:0007669"/>
    <property type="project" value="UniProtKB-UniRule"/>
</dbReference>
<dbReference type="Gene3D" id="3.90.226.10">
    <property type="entry name" value="2-enoyl-CoA Hydratase, Chain A, domain 1"/>
    <property type="match status" value="1"/>
</dbReference>
<dbReference type="HAMAP" id="MF_01395">
    <property type="entry name" value="AcetylCoA_CT_beta"/>
    <property type="match status" value="1"/>
</dbReference>
<dbReference type="InterPro" id="IPR034733">
    <property type="entry name" value="AcCoA_carboxyl_beta"/>
</dbReference>
<dbReference type="InterPro" id="IPR000438">
    <property type="entry name" value="Acetyl_CoA_COase_Trfase_b_su"/>
</dbReference>
<dbReference type="InterPro" id="IPR029045">
    <property type="entry name" value="ClpP/crotonase-like_dom_sf"/>
</dbReference>
<dbReference type="InterPro" id="IPR011762">
    <property type="entry name" value="COA_CT_N"/>
</dbReference>
<dbReference type="NCBIfam" id="TIGR00515">
    <property type="entry name" value="accD"/>
    <property type="match status" value="1"/>
</dbReference>
<dbReference type="PANTHER" id="PTHR42995">
    <property type="entry name" value="ACETYL-COENZYME A CARBOXYLASE CARBOXYL TRANSFERASE SUBUNIT BETA, CHLOROPLASTIC"/>
    <property type="match status" value="1"/>
</dbReference>
<dbReference type="PANTHER" id="PTHR42995:SF5">
    <property type="entry name" value="ACETYL-COENZYME A CARBOXYLASE CARBOXYL TRANSFERASE SUBUNIT BETA, CHLOROPLASTIC"/>
    <property type="match status" value="1"/>
</dbReference>
<dbReference type="Pfam" id="PF01039">
    <property type="entry name" value="Carboxyl_trans"/>
    <property type="match status" value="1"/>
</dbReference>
<dbReference type="PRINTS" id="PR01070">
    <property type="entry name" value="ACCCTRFRASEB"/>
</dbReference>
<dbReference type="SUPFAM" id="SSF52096">
    <property type="entry name" value="ClpP/crotonase"/>
    <property type="match status" value="1"/>
</dbReference>
<dbReference type="PROSITE" id="PS50980">
    <property type="entry name" value="COA_CT_NTER"/>
    <property type="match status" value="1"/>
</dbReference>
<evidence type="ECO:0000255" key="1">
    <source>
        <dbReference type="HAMAP-Rule" id="MF_01395"/>
    </source>
</evidence>
<evidence type="ECO:0000255" key="2">
    <source>
        <dbReference type="PROSITE-ProRule" id="PRU01136"/>
    </source>
</evidence>
<evidence type="ECO:0000256" key="3">
    <source>
        <dbReference type="SAM" id="MobiDB-lite"/>
    </source>
</evidence>
<reference key="1">
    <citation type="journal article" date="2004" name="Proc. Natl. Acad. Sci. U.S.A.">
        <title>The louse-borne human pathogen Bartonella quintana is a genomic derivative of the zoonotic agent Bartonella henselae.</title>
        <authorList>
            <person name="Alsmark U.C.M."/>
            <person name="Frank A.C."/>
            <person name="Karlberg E.O."/>
            <person name="Legault B.-A."/>
            <person name="Ardell D.H."/>
            <person name="Canbaeck B."/>
            <person name="Eriksson A.-S."/>
            <person name="Naeslund A.K."/>
            <person name="Handley S.A."/>
            <person name="Huvet M."/>
            <person name="La Scola B."/>
            <person name="Holmberg M."/>
            <person name="Andersson S.G.E."/>
        </authorList>
    </citation>
    <scope>NUCLEOTIDE SEQUENCE [LARGE SCALE GENOMIC DNA]</scope>
    <source>
        <strain>Toulouse</strain>
    </source>
</reference>
<proteinExistence type="inferred from homology"/>
<name>ACCD_BARQU</name>
<gene>
    <name evidence="1" type="primary">accD</name>
    <name type="ordered locus">BQ00320</name>
</gene>
<protein>
    <recommendedName>
        <fullName evidence="1">Acetyl-coenzyme A carboxylase carboxyl transferase subunit beta</fullName>
        <shortName evidence="1">ACCase subunit beta</shortName>
        <shortName evidence="1">Acetyl-CoA carboxylase carboxyltransferase subunit beta</shortName>
        <ecNumber evidence="1">2.1.3.15</ecNumber>
    </recommendedName>
</protein>
<organism>
    <name type="scientific">Bartonella quintana (strain Toulouse)</name>
    <name type="common">Rochalimaea quintana</name>
    <dbReference type="NCBI Taxonomy" id="283165"/>
    <lineage>
        <taxon>Bacteria</taxon>
        <taxon>Pseudomonadati</taxon>
        <taxon>Pseudomonadota</taxon>
        <taxon>Alphaproteobacteria</taxon>
        <taxon>Hyphomicrobiales</taxon>
        <taxon>Bartonellaceae</taxon>
        <taxon>Bartonella</taxon>
    </lineage>
</organism>
<sequence>MNWITNYVRPKINSILRRREIPDNLWIKDPTSGEMVFHKDLEVNQYVIPNSGYHMRISAKNRLMHFFDDGIYTPLENPKVVIDPLKFRDEKRYIDRLKDYRSKLGVDDNILSAQGTIEGLPIVATVQDFAFMGGSLGMASGEAIIKAFDTAIANKCPLVLFSASGGARMQEGTLSLMQMPRTTVAIEMMKEAKLPYIVVLTNPTTGGVTASYAMLGDIHIAEPGAMIGFAGPRVIQQTIRETLPEGFQSSEYLLEHGMIDMVVSRLEMKATIARLLRLIMKCPPAVNPSNPSPTDSQPPLSKAEAA</sequence>
<keyword id="KW-0067">ATP-binding</keyword>
<keyword id="KW-0963">Cytoplasm</keyword>
<keyword id="KW-0275">Fatty acid biosynthesis</keyword>
<keyword id="KW-0276">Fatty acid metabolism</keyword>
<keyword id="KW-0444">Lipid biosynthesis</keyword>
<keyword id="KW-0443">Lipid metabolism</keyword>
<keyword id="KW-0547">Nucleotide-binding</keyword>
<keyword id="KW-0808">Transferase</keyword>